<feature type="chain" id="PRO_0000241163" description="Glutamyl-tRNA(Gln) amidotransferase subunit A">
    <location>
        <begin position="1"/>
        <end position="485"/>
    </location>
</feature>
<feature type="active site" description="Charge relay system" evidence="1">
    <location>
        <position position="78"/>
    </location>
</feature>
<feature type="active site" description="Charge relay system" evidence="1">
    <location>
        <position position="153"/>
    </location>
</feature>
<feature type="active site" description="Acyl-ester intermediate" evidence="1">
    <location>
        <position position="177"/>
    </location>
</feature>
<accession>Q2LXM9</accession>
<gene>
    <name evidence="1" type="primary">gatA</name>
    <name type="ordered locus">SYNAS_29640</name>
    <name type="ORF">SYN_00308</name>
</gene>
<reference key="1">
    <citation type="journal article" date="2007" name="Proc. Natl. Acad. Sci. U.S.A.">
        <title>The genome of Syntrophus aciditrophicus: life at the thermodynamic limit of microbial growth.</title>
        <authorList>
            <person name="McInerney M.J."/>
            <person name="Rohlin L."/>
            <person name="Mouttaki H."/>
            <person name="Kim U."/>
            <person name="Krupp R.S."/>
            <person name="Rios-Hernandez L."/>
            <person name="Sieber J."/>
            <person name="Struchtemeyer C.G."/>
            <person name="Bhattacharyya A."/>
            <person name="Campbell J.W."/>
            <person name="Gunsalus R.P."/>
        </authorList>
    </citation>
    <scope>NUCLEOTIDE SEQUENCE [LARGE SCALE GENOMIC DNA]</scope>
    <source>
        <strain>SB</strain>
    </source>
</reference>
<keyword id="KW-0067">ATP-binding</keyword>
<keyword id="KW-0436">Ligase</keyword>
<keyword id="KW-0547">Nucleotide-binding</keyword>
<keyword id="KW-0648">Protein biosynthesis</keyword>
<keyword id="KW-1185">Reference proteome</keyword>
<sequence length="485" mass="52874">MELYQLTIHELQNKIRQGGVTSTAIVNSVFGRIDAVEENVHSYITLMRESALEEAQKADEQIRTGEINALTGIPVALKDIYCTRGVRTTCGSLILDNFIPPYDATVVVKLREAGAVFTGKTNMDEFAMGSSTETSYYGFTRNPWDLERIPGGSSGGSAAAVAADECIAALGSDTGGSIRQPAALCGVVGMKPTYGRVSRFGLIAFASSLDQIGPFTKDVEDCAILLNVIAGYDLRDSTSVPVDVPDYRDYLNRGIEGWTVGIPKEYFIEGIDPEVRGAIEQAIRTVEGLGARCREISLPHTDYCVAVYYIIAPAEASSNLARYDGVKYGFRAADCRDLLDMYKKTRSAGFGTEVKRRVMLGTYSLSSGYYDAYYKKASQVRGLIKRDFEEALKDCNVILTPTTPTPAFTIGEKTDDPMQMYLSDIFTISANLAGIPGISVPCGYTQSGLPVGIQFLAGHFEEGKLLQIASAYERNAHIEKRRPIL</sequence>
<protein>
    <recommendedName>
        <fullName evidence="1">Glutamyl-tRNA(Gln) amidotransferase subunit A</fullName>
        <shortName evidence="1">Glu-ADT subunit A</shortName>
        <ecNumber evidence="1">6.3.5.7</ecNumber>
    </recommendedName>
</protein>
<organism>
    <name type="scientific">Syntrophus aciditrophicus (strain SB)</name>
    <dbReference type="NCBI Taxonomy" id="56780"/>
    <lineage>
        <taxon>Bacteria</taxon>
        <taxon>Pseudomonadati</taxon>
        <taxon>Thermodesulfobacteriota</taxon>
        <taxon>Syntrophia</taxon>
        <taxon>Syntrophales</taxon>
        <taxon>Syntrophaceae</taxon>
        <taxon>Syntrophus</taxon>
    </lineage>
</organism>
<proteinExistence type="inferred from homology"/>
<comment type="function">
    <text evidence="1">Allows the formation of correctly charged Gln-tRNA(Gln) through the transamidation of misacylated Glu-tRNA(Gln) in organisms which lack glutaminyl-tRNA synthetase. The reaction takes place in the presence of glutamine and ATP through an activated gamma-phospho-Glu-tRNA(Gln).</text>
</comment>
<comment type="catalytic activity">
    <reaction evidence="1">
        <text>L-glutamyl-tRNA(Gln) + L-glutamine + ATP + H2O = L-glutaminyl-tRNA(Gln) + L-glutamate + ADP + phosphate + H(+)</text>
        <dbReference type="Rhea" id="RHEA:17521"/>
        <dbReference type="Rhea" id="RHEA-COMP:9681"/>
        <dbReference type="Rhea" id="RHEA-COMP:9684"/>
        <dbReference type="ChEBI" id="CHEBI:15377"/>
        <dbReference type="ChEBI" id="CHEBI:15378"/>
        <dbReference type="ChEBI" id="CHEBI:29985"/>
        <dbReference type="ChEBI" id="CHEBI:30616"/>
        <dbReference type="ChEBI" id="CHEBI:43474"/>
        <dbReference type="ChEBI" id="CHEBI:58359"/>
        <dbReference type="ChEBI" id="CHEBI:78520"/>
        <dbReference type="ChEBI" id="CHEBI:78521"/>
        <dbReference type="ChEBI" id="CHEBI:456216"/>
        <dbReference type="EC" id="6.3.5.7"/>
    </reaction>
</comment>
<comment type="subunit">
    <text evidence="1">Heterotrimer of A, B and C subunits.</text>
</comment>
<comment type="similarity">
    <text evidence="1">Belongs to the amidase family. GatA subfamily.</text>
</comment>
<evidence type="ECO:0000255" key="1">
    <source>
        <dbReference type="HAMAP-Rule" id="MF_00120"/>
    </source>
</evidence>
<dbReference type="EC" id="6.3.5.7" evidence="1"/>
<dbReference type="EMBL" id="CP000252">
    <property type="protein sequence ID" value="ABC78843.1"/>
    <property type="molecule type" value="Genomic_DNA"/>
</dbReference>
<dbReference type="RefSeq" id="WP_011418859.1">
    <property type="nucleotide sequence ID" value="NC_007759.1"/>
</dbReference>
<dbReference type="SMR" id="Q2LXM9"/>
<dbReference type="STRING" id="56780.SYN_00308"/>
<dbReference type="KEGG" id="sat:SYN_00308"/>
<dbReference type="eggNOG" id="COG0154">
    <property type="taxonomic scope" value="Bacteria"/>
</dbReference>
<dbReference type="HOGENOM" id="CLU_009600_0_3_7"/>
<dbReference type="InParanoid" id="Q2LXM9"/>
<dbReference type="OrthoDB" id="9811471at2"/>
<dbReference type="Proteomes" id="UP000001933">
    <property type="component" value="Chromosome"/>
</dbReference>
<dbReference type="GO" id="GO:0030956">
    <property type="term" value="C:glutamyl-tRNA(Gln) amidotransferase complex"/>
    <property type="evidence" value="ECO:0007669"/>
    <property type="project" value="InterPro"/>
</dbReference>
<dbReference type="GO" id="GO:0005524">
    <property type="term" value="F:ATP binding"/>
    <property type="evidence" value="ECO:0007669"/>
    <property type="project" value="UniProtKB-KW"/>
</dbReference>
<dbReference type="GO" id="GO:0050567">
    <property type="term" value="F:glutaminyl-tRNA synthase (glutamine-hydrolyzing) activity"/>
    <property type="evidence" value="ECO:0007669"/>
    <property type="project" value="UniProtKB-UniRule"/>
</dbReference>
<dbReference type="GO" id="GO:0006412">
    <property type="term" value="P:translation"/>
    <property type="evidence" value="ECO:0007669"/>
    <property type="project" value="UniProtKB-UniRule"/>
</dbReference>
<dbReference type="Gene3D" id="3.90.1300.10">
    <property type="entry name" value="Amidase signature (AS) domain"/>
    <property type="match status" value="1"/>
</dbReference>
<dbReference type="HAMAP" id="MF_00120">
    <property type="entry name" value="GatA"/>
    <property type="match status" value="1"/>
</dbReference>
<dbReference type="InterPro" id="IPR000120">
    <property type="entry name" value="Amidase"/>
</dbReference>
<dbReference type="InterPro" id="IPR020556">
    <property type="entry name" value="Amidase_CS"/>
</dbReference>
<dbReference type="InterPro" id="IPR023631">
    <property type="entry name" value="Amidase_dom"/>
</dbReference>
<dbReference type="InterPro" id="IPR036928">
    <property type="entry name" value="AS_sf"/>
</dbReference>
<dbReference type="InterPro" id="IPR004412">
    <property type="entry name" value="GatA"/>
</dbReference>
<dbReference type="NCBIfam" id="TIGR00132">
    <property type="entry name" value="gatA"/>
    <property type="match status" value="1"/>
</dbReference>
<dbReference type="PANTHER" id="PTHR11895:SF151">
    <property type="entry name" value="GLUTAMYL-TRNA(GLN) AMIDOTRANSFERASE SUBUNIT A"/>
    <property type="match status" value="1"/>
</dbReference>
<dbReference type="PANTHER" id="PTHR11895">
    <property type="entry name" value="TRANSAMIDASE"/>
    <property type="match status" value="1"/>
</dbReference>
<dbReference type="Pfam" id="PF01425">
    <property type="entry name" value="Amidase"/>
    <property type="match status" value="1"/>
</dbReference>
<dbReference type="SUPFAM" id="SSF75304">
    <property type="entry name" value="Amidase signature (AS) enzymes"/>
    <property type="match status" value="1"/>
</dbReference>
<dbReference type="PROSITE" id="PS00571">
    <property type="entry name" value="AMIDASES"/>
    <property type="match status" value="1"/>
</dbReference>
<name>GATA_SYNAS</name>